<reference key="1">
    <citation type="journal article" date="2007" name="PLoS Genet.">
        <title>Patterns and implications of gene gain and loss in the evolution of Prochlorococcus.</title>
        <authorList>
            <person name="Kettler G.C."/>
            <person name="Martiny A.C."/>
            <person name="Huang K."/>
            <person name="Zucker J."/>
            <person name="Coleman M.L."/>
            <person name="Rodrigue S."/>
            <person name="Chen F."/>
            <person name="Lapidus A."/>
            <person name="Ferriera S."/>
            <person name="Johnson J."/>
            <person name="Steglich C."/>
            <person name="Church G.M."/>
            <person name="Richardson P."/>
            <person name="Chisholm S.W."/>
        </authorList>
    </citation>
    <scope>NUCLEOTIDE SEQUENCE [LARGE SCALE GENOMIC DNA]</scope>
    <source>
        <strain>NATL2A</strain>
    </source>
</reference>
<evidence type="ECO:0000255" key="1">
    <source>
        <dbReference type="HAMAP-Rule" id="MF_01037"/>
    </source>
</evidence>
<accession>Q46K52</accession>
<proteinExistence type="inferred from homology"/>
<protein>
    <recommendedName>
        <fullName evidence="1">Methylenetetrahydrofolate--tRNA-(uracil-5-)-methyltransferase TrmFO</fullName>
        <ecNumber evidence="1">2.1.1.74</ecNumber>
    </recommendedName>
    <alternativeName>
        <fullName evidence="1">Folate-dependent tRNA (uracil-5-)-methyltransferase</fullName>
    </alternativeName>
    <alternativeName>
        <fullName evidence="1">Folate-dependent tRNA(M-5-U54)-methyltransferase</fullName>
    </alternativeName>
</protein>
<keyword id="KW-0963">Cytoplasm</keyword>
<keyword id="KW-0274">FAD</keyword>
<keyword id="KW-0285">Flavoprotein</keyword>
<keyword id="KW-0489">Methyltransferase</keyword>
<keyword id="KW-0520">NAD</keyword>
<keyword id="KW-0521">NADP</keyword>
<keyword id="KW-1185">Reference proteome</keyword>
<keyword id="KW-0808">Transferase</keyword>
<keyword id="KW-0819">tRNA processing</keyword>
<dbReference type="EC" id="2.1.1.74" evidence="1"/>
<dbReference type="EMBL" id="CP000095">
    <property type="protein sequence ID" value="AAZ58126.1"/>
    <property type="molecule type" value="Genomic_DNA"/>
</dbReference>
<dbReference type="RefSeq" id="WP_011294724.1">
    <property type="nucleotide sequence ID" value="NC_007335.2"/>
</dbReference>
<dbReference type="SMR" id="Q46K52"/>
<dbReference type="STRING" id="59920.PMN2A_0635"/>
<dbReference type="KEGG" id="pmn:PMN2A_0635"/>
<dbReference type="HOGENOM" id="CLU_033057_1_0_3"/>
<dbReference type="OrthoDB" id="9803114at2"/>
<dbReference type="PhylomeDB" id="Q46K52"/>
<dbReference type="Proteomes" id="UP000002535">
    <property type="component" value="Chromosome"/>
</dbReference>
<dbReference type="GO" id="GO:0005829">
    <property type="term" value="C:cytosol"/>
    <property type="evidence" value="ECO:0007669"/>
    <property type="project" value="TreeGrafter"/>
</dbReference>
<dbReference type="GO" id="GO:0050660">
    <property type="term" value="F:flavin adenine dinucleotide binding"/>
    <property type="evidence" value="ECO:0007669"/>
    <property type="project" value="UniProtKB-UniRule"/>
</dbReference>
<dbReference type="GO" id="GO:0047151">
    <property type="term" value="F:tRNA (uracil(54)-C5)-methyltransferase activity, 5,10-methylenetetrahydrofolate-dependent"/>
    <property type="evidence" value="ECO:0007669"/>
    <property type="project" value="UniProtKB-UniRule"/>
</dbReference>
<dbReference type="GO" id="GO:0030488">
    <property type="term" value="P:tRNA methylation"/>
    <property type="evidence" value="ECO:0007669"/>
    <property type="project" value="TreeGrafter"/>
</dbReference>
<dbReference type="GO" id="GO:0002098">
    <property type="term" value="P:tRNA wobble uridine modification"/>
    <property type="evidence" value="ECO:0007669"/>
    <property type="project" value="TreeGrafter"/>
</dbReference>
<dbReference type="Gene3D" id="3.50.50.60">
    <property type="entry name" value="FAD/NAD(P)-binding domain"/>
    <property type="match status" value="2"/>
</dbReference>
<dbReference type="HAMAP" id="MF_01037">
    <property type="entry name" value="TrmFO"/>
    <property type="match status" value="1"/>
</dbReference>
<dbReference type="InterPro" id="IPR036188">
    <property type="entry name" value="FAD/NAD-bd_sf"/>
</dbReference>
<dbReference type="InterPro" id="IPR002218">
    <property type="entry name" value="MnmG-rel"/>
</dbReference>
<dbReference type="InterPro" id="IPR040131">
    <property type="entry name" value="MnmG_N"/>
</dbReference>
<dbReference type="InterPro" id="IPR004417">
    <property type="entry name" value="TrmFO"/>
</dbReference>
<dbReference type="NCBIfam" id="TIGR00137">
    <property type="entry name" value="gid_trmFO"/>
    <property type="match status" value="1"/>
</dbReference>
<dbReference type="NCBIfam" id="NF003739">
    <property type="entry name" value="PRK05335.1"/>
    <property type="match status" value="1"/>
</dbReference>
<dbReference type="PANTHER" id="PTHR11806">
    <property type="entry name" value="GLUCOSE INHIBITED DIVISION PROTEIN A"/>
    <property type="match status" value="1"/>
</dbReference>
<dbReference type="PANTHER" id="PTHR11806:SF2">
    <property type="entry name" value="METHYLENETETRAHYDROFOLATE--TRNA-(URACIL-5-)-METHYLTRANSFERASE TRMFO"/>
    <property type="match status" value="1"/>
</dbReference>
<dbReference type="Pfam" id="PF01134">
    <property type="entry name" value="GIDA"/>
    <property type="match status" value="1"/>
</dbReference>
<dbReference type="SUPFAM" id="SSF51905">
    <property type="entry name" value="FAD/NAD(P)-binding domain"/>
    <property type="match status" value="1"/>
</dbReference>
<name>TRMFO_PROMT</name>
<sequence length="467" mass="51911">MKEYPSVTVIGAGLAGSEAAWQIASAGIKVTLFEMRPKKKSLAHHTSEFAELVCSNSFGALSSDRAAGLLQEELRTLQSIVINNADKYSVPAGGALAVDRSQFSLSITNEVSSHPLITIIRDECPCLPKAHQITILATGPLTSELLAKDIKEFTGEKECHFFDAASPIITGESIDFLTAFRASRYDKGDADYVNCPMNEDSYIKFHSELIKAEQAELKDFEKESANFFEGCLPIEQLAKRGIETMRYGPLKPIGIWDPRWGDVNDKSIRRLKRAHAVVQLRQEDKAGKLWNLVGFQTNLKWGEQKRIFRMIPGLSKAEFIRFGVMHRNTFIESPKLIEPTLQFTNRKTLFAAGQLTGTEGYAAAVAGGWLAGTNAALLAKGLDTITLPSSTMIGALTNFVSNSQASLRVKNKKNFQPMPANFGILPELDIRVHNKRERYKEYRDRALRQIKKLRETLLDKSSSPTNI</sequence>
<feature type="chain" id="PRO_0000346383" description="Methylenetetrahydrofolate--tRNA-(uracil-5-)-methyltransferase TrmFO">
    <location>
        <begin position="1"/>
        <end position="467"/>
    </location>
</feature>
<feature type="binding site" evidence="1">
    <location>
        <begin position="11"/>
        <end position="16"/>
    </location>
    <ligand>
        <name>FAD</name>
        <dbReference type="ChEBI" id="CHEBI:57692"/>
    </ligand>
</feature>
<gene>
    <name evidence="1" type="primary">trmFO</name>
    <name type="ordered locus">PMN2A_0635</name>
</gene>
<comment type="function">
    <text evidence="1">Catalyzes the folate-dependent formation of 5-methyl-uridine at position 54 (M-5-U54) in all tRNAs.</text>
</comment>
<comment type="catalytic activity">
    <reaction evidence="1">
        <text>uridine(54) in tRNA + (6R)-5,10-methylene-5,6,7,8-tetrahydrofolate + NADH + H(+) = 5-methyluridine(54) in tRNA + (6S)-5,6,7,8-tetrahydrofolate + NAD(+)</text>
        <dbReference type="Rhea" id="RHEA:16873"/>
        <dbReference type="Rhea" id="RHEA-COMP:10167"/>
        <dbReference type="Rhea" id="RHEA-COMP:10193"/>
        <dbReference type="ChEBI" id="CHEBI:15378"/>
        <dbReference type="ChEBI" id="CHEBI:15636"/>
        <dbReference type="ChEBI" id="CHEBI:57453"/>
        <dbReference type="ChEBI" id="CHEBI:57540"/>
        <dbReference type="ChEBI" id="CHEBI:57945"/>
        <dbReference type="ChEBI" id="CHEBI:65315"/>
        <dbReference type="ChEBI" id="CHEBI:74447"/>
        <dbReference type="EC" id="2.1.1.74"/>
    </reaction>
</comment>
<comment type="catalytic activity">
    <reaction evidence="1">
        <text>uridine(54) in tRNA + (6R)-5,10-methylene-5,6,7,8-tetrahydrofolate + NADPH + H(+) = 5-methyluridine(54) in tRNA + (6S)-5,6,7,8-tetrahydrofolate + NADP(+)</text>
        <dbReference type="Rhea" id="RHEA:62372"/>
        <dbReference type="Rhea" id="RHEA-COMP:10167"/>
        <dbReference type="Rhea" id="RHEA-COMP:10193"/>
        <dbReference type="ChEBI" id="CHEBI:15378"/>
        <dbReference type="ChEBI" id="CHEBI:15636"/>
        <dbReference type="ChEBI" id="CHEBI:57453"/>
        <dbReference type="ChEBI" id="CHEBI:57783"/>
        <dbReference type="ChEBI" id="CHEBI:58349"/>
        <dbReference type="ChEBI" id="CHEBI:65315"/>
        <dbReference type="ChEBI" id="CHEBI:74447"/>
        <dbReference type="EC" id="2.1.1.74"/>
    </reaction>
</comment>
<comment type="cofactor">
    <cofactor evidence="1">
        <name>FAD</name>
        <dbReference type="ChEBI" id="CHEBI:57692"/>
    </cofactor>
</comment>
<comment type="subcellular location">
    <subcellularLocation>
        <location evidence="1">Cytoplasm</location>
    </subcellularLocation>
</comment>
<comment type="similarity">
    <text evidence="1">Belongs to the MnmG family. TrmFO subfamily.</text>
</comment>
<organism>
    <name type="scientific">Prochlorococcus marinus (strain NATL2A)</name>
    <dbReference type="NCBI Taxonomy" id="59920"/>
    <lineage>
        <taxon>Bacteria</taxon>
        <taxon>Bacillati</taxon>
        <taxon>Cyanobacteriota</taxon>
        <taxon>Cyanophyceae</taxon>
        <taxon>Synechococcales</taxon>
        <taxon>Prochlorococcaceae</taxon>
        <taxon>Prochlorococcus</taxon>
    </lineage>
</organism>